<comment type="function">
    <text evidence="1">An accessory protein needed during the final step in the assembly of 30S ribosomal subunit, possibly for assembly of the head region. Essential for efficient processing of 16S rRNA. May be needed both before and after RbfA during the maturation of 16S rRNA. It has affinity for free ribosomal 30S subunits but not for 70S ribosomes.</text>
</comment>
<comment type="subunit">
    <text evidence="1">Binds ribosomal protein uS19.</text>
</comment>
<comment type="subcellular location">
    <subcellularLocation>
        <location evidence="1">Cytoplasm</location>
    </subcellularLocation>
</comment>
<comment type="domain">
    <text evidence="1">The PRC barrel domain binds ribosomal protein uS19.</text>
</comment>
<comment type="similarity">
    <text evidence="1">Belongs to the RimM family.</text>
</comment>
<proteinExistence type="inferred from homology"/>
<name>RIMM_DELAS</name>
<organism>
    <name type="scientific">Delftia acidovorans (strain DSM 14801 / SPH-1)</name>
    <dbReference type="NCBI Taxonomy" id="398578"/>
    <lineage>
        <taxon>Bacteria</taxon>
        <taxon>Pseudomonadati</taxon>
        <taxon>Pseudomonadota</taxon>
        <taxon>Betaproteobacteria</taxon>
        <taxon>Burkholderiales</taxon>
        <taxon>Comamonadaceae</taxon>
        <taxon>Delftia</taxon>
    </lineage>
</organism>
<protein>
    <recommendedName>
        <fullName evidence="1">Ribosome maturation factor RimM</fullName>
    </recommendedName>
</protein>
<reference key="1">
    <citation type="submission" date="2007-11" db="EMBL/GenBank/DDBJ databases">
        <title>Complete sequence of Delftia acidovorans DSM 14801 / SPH-1.</title>
        <authorList>
            <person name="Copeland A."/>
            <person name="Lucas S."/>
            <person name="Lapidus A."/>
            <person name="Barry K."/>
            <person name="Glavina del Rio T."/>
            <person name="Dalin E."/>
            <person name="Tice H."/>
            <person name="Pitluck S."/>
            <person name="Lowry S."/>
            <person name="Clum A."/>
            <person name="Schmutz J."/>
            <person name="Larimer F."/>
            <person name="Land M."/>
            <person name="Hauser L."/>
            <person name="Kyrpides N."/>
            <person name="Kim E."/>
            <person name="Schleheck D."/>
            <person name="Richardson P."/>
        </authorList>
    </citation>
    <scope>NUCLEOTIDE SEQUENCE [LARGE SCALE GENOMIC DNA]</scope>
    <source>
        <strain>DSM 14801 / SPH-1</strain>
    </source>
</reference>
<accession>A9BNS8</accession>
<evidence type="ECO:0000255" key="1">
    <source>
        <dbReference type="HAMAP-Rule" id="MF_00014"/>
    </source>
</evidence>
<keyword id="KW-0143">Chaperone</keyword>
<keyword id="KW-0963">Cytoplasm</keyword>
<keyword id="KW-1185">Reference proteome</keyword>
<keyword id="KW-0690">Ribosome biogenesis</keyword>
<keyword id="KW-0698">rRNA processing</keyword>
<sequence>MSHMPELEASVLPADAVEVGRIADAWGIKGWFKVAAFSADPEALFTAKQWYLQPPEKGARQFTGTVLLPVKQARVHSDSVVATSPVVNDRNTAEALRGARIFVARSDFPQPEDGEYYWVDLLGLSVVNREGVVLGVVRDLLSTGPQTVLVLAYEEDGKERERMIPFVDAYVDKVDLPGKTIVADWQPDY</sequence>
<feature type="chain" id="PRO_0000351754" description="Ribosome maturation factor RimM">
    <location>
        <begin position="1"/>
        <end position="189"/>
    </location>
</feature>
<feature type="domain" description="PRC barrel" evidence="1">
    <location>
        <begin position="113"/>
        <end position="189"/>
    </location>
</feature>
<gene>
    <name evidence="1" type="primary">rimM</name>
    <name type="ordered locus">Daci_5344</name>
</gene>
<dbReference type="EMBL" id="CP000884">
    <property type="protein sequence ID" value="ABX37973.1"/>
    <property type="molecule type" value="Genomic_DNA"/>
</dbReference>
<dbReference type="RefSeq" id="WP_012207142.1">
    <property type="nucleotide sequence ID" value="NC_010002.1"/>
</dbReference>
<dbReference type="SMR" id="A9BNS8"/>
<dbReference type="STRING" id="398578.Daci_5344"/>
<dbReference type="GeneID" id="24118552"/>
<dbReference type="KEGG" id="dac:Daci_5344"/>
<dbReference type="eggNOG" id="COG0806">
    <property type="taxonomic scope" value="Bacteria"/>
</dbReference>
<dbReference type="HOGENOM" id="CLU_077636_1_0_4"/>
<dbReference type="Proteomes" id="UP000000784">
    <property type="component" value="Chromosome"/>
</dbReference>
<dbReference type="GO" id="GO:0005737">
    <property type="term" value="C:cytoplasm"/>
    <property type="evidence" value="ECO:0007669"/>
    <property type="project" value="UniProtKB-SubCell"/>
</dbReference>
<dbReference type="GO" id="GO:0005840">
    <property type="term" value="C:ribosome"/>
    <property type="evidence" value="ECO:0007669"/>
    <property type="project" value="InterPro"/>
</dbReference>
<dbReference type="GO" id="GO:0043022">
    <property type="term" value="F:ribosome binding"/>
    <property type="evidence" value="ECO:0007669"/>
    <property type="project" value="InterPro"/>
</dbReference>
<dbReference type="GO" id="GO:0042274">
    <property type="term" value="P:ribosomal small subunit biogenesis"/>
    <property type="evidence" value="ECO:0007669"/>
    <property type="project" value="UniProtKB-UniRule"/>
</dbReference>
<dbReference type="GO" id="GO:0006364">
    <property type="term" value="P:rRNA processing"/>
    <property type="evidence" value="ECO:0007669"/>
    <property type="project" value="UniProtKB-UniRule"/>
</dbReference>
<dbReference type="Gene3D" id="2.30.30.240">
    <property type="entry name" value="PRC-barrel domain"/>
    <property type="match status" value="1"/>
</dbReference>
<dbReference type="Gene3D" id="2.40.30.60">
    <property type="entry name" value="RimM"/>
    <property type="match status" value="1"/>
</dbReference>
<dbReference type="HAMAP" id="MF_00014">
    <property type="entry name" value="Ribosome_mat_RimM"/>
    <property type="match status" value="1"/>
</dbReference>
<dbReference type="InterPro" id="IPR011033">
    <property type="entry name" value="PRC_barrel-like_sf"/>
</dbReference>
<dbReference type="InterPro" id="IPR056792">
    <property type="entry name" value="PRC_RimM"/>
</dbReference>
<dbReference type="InterPro" id="IPR011961">
    <property type="entry name" value="RimM"/>
</dbReference>
<dbReference type="InterPro" id="IPR002676">
    <property type="entry name" value="RimM_N"/>
</dbReference>
<dbReference type="InterPro" id="IPR036976">
    <property type="entry name" value="RimM_N_sf"/>
</dbReference>
<dbReference type="InterPro" id="IPR009000">
    <property type="entry name" value="Transl_B-barrel_sf"/>
</dbReference>
<dbReference type="NCBIfam" id="TIGR02273">
    <property type="entry name" value="16S_RimM"/>
    <property type="match status" value="1"/>
</dbReference>
<dbReference type="PANTHER" id="PTHR33692">
    <property type="entry name" value="RIBOSOME MATURATION FACTOR RIMM"/>
    <property type="match status" value="1"/>
</dbReference>
<dbReference type="PANTHER" id="PTHR33692:SF1">
    <property type="entry name" value="RIBOSOME MATURATION FACTOR RIMM"/>
    <property type="match status" value="1"/>
</dbReference>
<dbReference type="Pfam" id="PF24986">
    <property type="entry name" value="PRC_RimM"/>
    <property type="match status" value="1"/>
</dbReference>
<dbReference type="Pfam" id="PF01782">
    <property type="entry name" value="RimM"/>
    <property type="match status" value="1"/>
</dbReference>
<dbReference type="SUPFAM" id="SSF50346">
    <property type="entry name" value="PRC-barrel domain"/>
    <property type="match status" value="1"/>
</dbReference>
<dbReference type="SUPFAM" id="SSF50447">
    <property type="entry name" value="Translation proteins"/>
    <property type="match status" value="1"/>
</dbReference>